<dbReference type="EMBL" id="L15408">
    <property type="protein sequence ID" value="AAC37411.1"/>
    <property type="molecule type" value="Unassigned_DNA"/>
</dbReference>
<dbReference type="EMBL" id="X95966">
    <property type="protein sequence ID" value="CAA65218.1"/>
    <property type="molecule type" value="Genomic_DNA"/>
</dbReference>
<dbReference type="EMBL" id="Z47814">
    <property type="protein sequence ID" value="CAA87804.1"/>
    <property type="molecule type" value="Genomic_DNA"/>
</dbReference>
<dbReference type="EMBL" id="Z74321">
    <property type="protein sequence ID" value="CAA98846.1"/>
    <property type="molecule type" value="Genomic_DNA"/>
</dbReference>
<dbReference type="EMBL" id="BK006938">
    <property type="protein sequence ID" value="DAA11870.1"/>
    <property type="molecule type" value="Genomic_DNA"/>
</dbReference>
<dbReference type="PIR" id="S41784">
    <property type="entry name" value="S41784"/>
</dbReference>
<dbReference type="RefSeq" id="NP_010308.3">
    <property type="nucleotide sequence ID" value="NM_001180333.3"/>
</dbReference>
<dbReference type="PDB" id="3J6X">
    <property type="method" value="EM"/>
    <property type="resolution" value="6.10 A"/>
    <property type="chains" value="11=1-156"/>
</dbReference>
<dbReference type="PDB" id="3J6Y">
    <property type="method" value="EM"/>
    <property type="resolution" value="6.10 A"/>
    <property type="chains" value="11=1-156"/>
</dbReference>
<dbReference type="PDB" id="3J77">
    <property type="method" value="EM"/>
    <property type="resolution" value="6.20 A"/>
    <property type="chains" value="11=1-156"/>
</dbReference>
<dbReference type="PDB" id="3J78">
    <property type="method" value="EM"/>
    <property type="resolution" value="6.30 A"/>
    <property type="chains" value="11=1-156"/>
</dbReference>
<dbReference type="PDB" id="4U3M">
    <property type="method" value="X-ray"/>
    <property type="resolution" value="3.00 A"/>
    <property type="chains" value="C1/c1=2-156"/>
</dbReference>
<dbReference type="PDB" id="4U3N">
    <property type="method" value="X-ray"/>
    <property type="resolution" value="3.20 A"/>
    <property type="chains" value="C1/c1=2-156"/>
</dbReference>
<dbReference type="PDB" id="4U3U">
    <property type="method" value="X-ray"/>
    <property type="resolution" value="2.90 A"/>
    <property type="chains" value="C1/c1=2-156"/>
</dbReference>
<dbReference type="PDB" id="4U4N">
    <property type="method" value="X-ray"/>
    <property type="resolution" value="3.10 A"/>
    <property type="chains" value="C1/c1=2-156"/>
</dbReference>
<dbReference type="PDB" id="4U4O">
    <property type="method" value="X-ray"/>
    <property type="resolution" value="3.60 A"/>
    <property type="chains" value="C1/c1=2-156"/>
</dbReference>
<dbReference type="PDB" id="4U4Q">
    <property type="method" value="X-ray"/>
    <property type="resolution" value="3.00 A"/>
    <property type="chains" value="C1/c1=2-156"/>
</dbReference>
<dbReference type="PDB" id="4U4R">
    <property type="method" value="X-ray"/>
    <property type="resolution" value="2.80 A"/>
    <property type="chains" value="C1/c1=2-156"/>
</dbReference>
<dbReference type="PDB" id="4U4U">
    <property type="method" value="X-ray"/>
    <property type="resolution" value="3.00 A"/>
    <property type="chains" value="C1/c1=2-156"/>
</dbReference>
<dbReference type="PDB" id="4U4Y">
    <property type="method" value="X-ray"/>
    <property type="resolution" value="3.20 A"/>
    <property type="chains" value="C1/c1=2-156"/>
</dbReference>
<dbReference type="PDB" id="4U4Z">
    <property type="method" value="X-ray"/>
    <property type="resolution" value="3.10 A"/>
    <property type="chains" value="C1/c1=2-156"/>
</dbReference>
<dbReference type="PDB" id="4U50">
    <property type="method" value="X-ray"/>
    <property type="resolution" value="3.20 A"/>
    <property type="chains" value="C1/c1=2-156"/>
</dbReference>
<dbReference type="PDB" id="4U51">
    <property type="method" value="X-ray"/>
    <property type="resolution" value="3.20 A"/>
    <property type="chains" value="C1/c1=2-156"/>
</dbReference>
<dbReference type="PDB" id="4U52">
    <property type="method" value="X-ray"/>
    <property type="resolution" value="3.00 A"/>
    <property type="chains" value="C1/c1=2-156"/>
</dbReference>
<dbReference type="PDB" id="4U53">
    <property type="method" value="X-ray"/>
    <property type="resolution" value="3.30 A"/>
    <property type="chains" value="C1/c1=2-156"/>
</dbReference>
<dbReference type="PDB" id="4U55">
    <property type="method" value="X-ray"/>
    <property type="resolution" value="3.20 A"/>
    <property type="chains" value="C1/c1=2-156"/>
</dbReference>
<dbReference type="PDB" id="4U56">
    <property type="method" value="X-ray"/>
    <property type="resolution" value="3.45 A"/>
    <property type="chains" value="C1/c1=2-156"/>
</dbReference>
<dbReference type="PDB" id="4U6F">
    <property type="method" value="X-ray"/>
    <property type="resolution" value="3.10 A"/>
    <property type="chains" value="C1/c1=2-156"/>
</dbReference>
<dbReference type="PDB" id="4V4B">
    <property type="method" value="EM"/>
    <property type="resolution" value="11.70 A"/>
    <property type="chains" value="AQ=69-144"/>
</dbReference>
<dbReference type="PDB" id="4V5Z">
    <property type="method" value="EM"/>
    <property type="resolution" value="8.70 A"/>
    <property type="chains" value="Aq=7-156"/>
</dbReference>
<dbReference type="PDB" id="4V6I">
    <property type="method" value="EM"/>
    <property type="resolution" value="8.80 A"/>
    <property type="chains" value="AP=1-156"/>
</dbReference>
<dbReference type="PDB" id="4V7R">
    <property type="method" value="X-ray"/>
    <property type="resolution" value="4.00 A"/>
    <property type="chains" value="AF/CF=1-156"/>
</dbReference>
<dbReference type="PDB" id="4V88">
    <property type="method" value="X-ray"/>
    <property type="resolution" value="3.00 A"/>
    <property type="chains" value="AL/CL=1-156"/>
</dbReference>
<dbReference type="PDB" id="4V8Y">
    <property type="method" value="EM"/>
    <property type="resolution" value="4.30 A"/>
    <property type="chains" value="AL=1-156"/>
</dbReference>
<dbReference type="PDB" id="4V8Z">
    <property type="method" value="EM"/>
    <property type="resolution" value="6.60 A"/>
    <property type="chains" value="AL=1-156"/>
</dbReference>
<dbReference type="PDB" id="4V92">
    <property type="method" value="EM"/>
    <property type="resolution" value="3.70 A"/>
    <property type="chains" value="L=4-145"/>
</dbReference>
<dbReference type="PDB" id="5DAT">
    <property type="method" value="X-ray"/>
    <property type="resolution" value="3.15 A"/>
    <property type="chains" value="C1/c1=2-156"/>
</dbReference>
<dbReference type="PDB" id="5DC3">
    <property type="method" value="X-ray"/>
    <property type="resolution" value="3.25 A"/>
    <property type="chains" value="C1/c1=2-156"/>
</dbReference>
<dbReference type="PDB" id="5DGE">
    <property type="method" value="X-ray"/>
    <property type="resolution" value="3.45 A"/>
    <property type="chains" value="C1/c1=2-156"/>
</dbReference>
<dbReference type="PDB" id="5DGF">
    <property type="method" value="X-ray"/>
    <property type="resolution" value="3.30 A"/>
    <property type="chains" value="C1/c1=1-156"/>
</dbReference>
<dbReference type="PDB" id="5DGV">
    <property type="method" value="X-ray"/>
    <property type="resolution" value="3.10 A"/>
    <property type="chains" value="C1/c1=2-156"/>
</dbReference>
<dbReference type="PDB" id="5FCI">
    <property type="method" value="X-ray"/>
    <property type="resolution" value="3.40 A"/>
    <property type="chains" value="C1/c1=2-147"/>
</dbReference>
<dbReference type="PDB" id="5FCJ">
    <property type="method" value="X-ray"/>
    <property type="resolution" value="3.10 A"/>
    <property type="chains" value="C1/c1=2-146"/>
</dbReference>
<dbReference type="PDB" id="5I4L">
    <property type="method" value="X-ray"/>
    <property type="resolution" value="3.10 A"/>
    <property type="chains" value="C1/c1=1-156"/>
</dbReference>
<dbReference type="PDB" id="5JUO">
    <property type="method" value="EM"/>
    <property type="resolution" value="4.00 A"/>
    <property type="chains" value="IB=1-156"/>
</dbReference>
<dbReference type="PDB" id="5JUP">
    <property type="method" value="EM"/>
    <property type="resolution" value="3.50 A"/>
    <property type="chains" value="IB=1-156"/>
</dbReference>
<dbReference type="PDB" id="5JUS">
    <property type="method" value="EM"/>
    <property type="resolution" value="4.20 A"/>
    <property type="chains" value="IB=1-156"/>
</dbReference>
<dbReference type="PDB" id="5JUT">
    <property type="method" value="EM"/>
    <property type="resolution" value="4.00 A"/>
    <property type="chains" value="IB=1-156"/>
</dbReference>
<dbReference type="PDB" id="5JUU">
    <property type="method" value="EM"/>
    <property type="resolution" value="4.00 A"/>
    <property type="chains" value="IB=1-156"/>
</dbReference>
<dbReference type="PDB" id="5LL6">
    <property type="method" value="EM"/>
    <property type="resolution" value="3.90 A"/>
    <property type="chains" value="X=1-156"/>
</dbReference>
<dbReference type="PDB" id="5LYB">
    <property type="method" value="X-ray"/>
    <property type="resolution" value="3.25 A"/>
    <property type="chains" value="C1/c1=2-146"/>
</dbReference>
<dbReference type="PDB" id="5M1J">
    <property type="method" value="EM"/>
    <property type="resolution" value="3.30 A"/>
    <property type="chains" value="L2=2-156"/>
</dbReference>
<dbReference type="PDB" id="5MC6">
    <property type="method" value="EM"/>
    <property type="resolution" value="3.80 A"/>
    <property type="chains" value="X=1-156"/>
</dbReference>
<dbReference type="PDB" id="5MEI">
    <property type="method" value="X-ray"/>
    <property type="resolution" value="3.50 A"/>
    <property type="chains" value="M/c1=2-156"/>
</dbReference>
<dbReference type="PDB" id="5NDG">
    <property type="method" value="X-ray"/>
    <property type="resolution" value="3.70 A"/>
    <property type="chains" value="C1/c1=1-156"/>
</dbReference>
<dbReference type="PDB" id="5NDV">
    <property type="method" value="X-ray"/>
    <property type="resolution" value="3.30 A"/>
    <property type="chains" value="C1/c1=2-147"/>
</dbReference>
<dbReference type="PDB" id="5NDW">
    <property type="method" value="X-ray"/>
    <property type="resolution" value="3.70 A"/>
    <property type="chains" value="C1/c1=1-156"/>
</dbReference>
<dbReference type="PDB" id="5OBM">
    <property type="method" value="X-ray"/>
    <property type="resolution" value="3.40 A"/>
    <property type="chains" value="C1/c1=1-156"/>
</dbReference>
<dbReference type="PDB" id="5ON6">
    <property type="method" value="X-ray"/>
    <property type="resolution" value="3.10 A"/>
    <property type="chains" value="M/c1=2-156"/>
</dbReference>
<dbReference type="PDB" id="5TBW">
    <property type="method" value="X-ray"/>
    <property type="resolution" value="3.00 A"/>
    <property type="chains" value="M/c1=2-156"/>
</dbReference>
<dbReference type="PDB" id="5TGA">
    <property type="method" value="X-ray"/>
    <property type="resolution" value="3.30 A"/>
    <property type="chains" value="C1/c1=2-156"/>
</dbReference>
<dbReference type="PDB" id="5TGM">
    <property type="method" value="X-ray"/>
    <property type="resolution" value="3.50 A"/>
    <property type="chains" value="C1/c1=2-146"/>
</dbReference>
<dbReference type="PDB" id="5TZS">
    <property type="method" value="EM"/>
    <property type="resolution" value="5.10 A"/>
    <property type="chains" value="D=1-156"/>
</dbReference>
<dbReference type="PDB" id="5WLC">
    <property type="method" value="EM"/>
    <property type="resolution" value="3.80 A"/>
    <property type="chains" value="LD=1-156"/>
</dbReference>
<dbReference type="PDB" id="5WYJ">
    <property type="method" value="EM"/>
    <property type="resolution" value="8.70 A"/>
    <property type="chains" value="SM=1-156"/>
</dbReference>
<dbReference type="PDB" id="5WYK">
    <property type="method" value="EM"/>
    <property type="resolution" value="4.50 A"/>
    <property type="chains" value="SM=1-156"/>
</dbReference>
<dbReference type="PDB" id="6EML">
    <property type="method" value="EM"/>
    <property type="resolution" value="3.60 A"/>
    <property type="chains" value="X=1-156"/>
</dbReference>
<dbReference type="PDB" id="6FAI">
    <property type="method" value="EM"/>
    <property type="resolution" value="3.40 A"/>
    <property type="chains" value="L=1-156"/>
</dbReference>
<dbReference type="PDB" id="6GQ1">
    <property type="method" value="EM"/>
    <property type="resolution" value="4.40 A"/>
    <property type="chains" value="AB=2-154"/>
</dbReference>
<dbReference type="PDB" id="6GQB">
    <property type="method" value="EM"/>
    <property type="resolution" value="3.90 A"/>
    <property type="chains" value="AB=2-154"/>
</dbReference>
<dbReference type="PDB" id="6GQV">
    <property type="method" value="EM"/>
    <property type="resolution" value="4.00 A"/>
    <property type="chains" value="AB=2-154"/>
</dbReference>
<dbReference type="PDB" id="6HHQ">
    <property type="method" value="X-ray"/>
    <property type="resolution" value="3.10 A"/>
    <property type="chains" value="M/c1=1-156"/>
</dbReference>
<dbReference type="PDB" id="6I7O">
    <property type="method" value="EM"/>
    <property type="resolution" value="5.30 A"/>
    <property type="chains" value="X/Xb=2-147"/>
</dbReference>
<dbReference type="PDB" id="6KE6">
    <property type="method" value="EM"/>
    <property type="resolution" value="3.40 A"/>
    <property type="chains" value="SM=1-156"/>
</dbReference>
<dbReference type="PDB" id="6LQP">
    <property type="method" value="EM"/>
    <property type="resolution" value="3.20 A"/>
    <property type="chains" value="SM=1-156"/>
</dbReference>
<dbReference type="PDB" id="6LQQ">
    <property type="method" value="EM"/>
    <property type="resolution" value="4.10 A"/>
    <property type="chains" value="SM=1-156"/>
</dbReference>
<dbReference type="PDB" id="6LQR">
    <property type="method" value="EM"/>
    <property type="resolution" value="8.60 A"/>
    <property type="chains" value="SM=1-156"/>
</dbReference>
<dbReference type="PDB" id="6LQS">
    <property type="method" value="EM"/>
    <property type="resolution" value="3.80 A"/>
    <property type="chains" value="SM=1-156"/>
</dbReference>
<dbReference type="PDB" id="6LQT">
    <property type="method" value="EM"/>
    <property type="resolution" value="4.90 A"/>
    <property type="chains" value="SM=1-156"/>
</dbReference>
<dbReference type="PDB" id="6LQU">
    <property type="method" value="EM"/>
    <property type="resolution" value="3.70 A"/>
    <property type="chains" value="SM=1-156"/>
</dbReference>
<dbReference type="PDB" id="6LQV">
    <property type="method" value="EM"/>
    <property type="resolution" value="4.80 A"/>
    <property type="chains" value="SM=1-156"/>
</dbReference>
<dbReference type="PDB" id="6Q8Y">
    <property type="method" value="EM"/>
    <property type="resolution" value="3.10 A"/>
    <property type="chains" value="X=2-156"/>
</dbReference>
<dbReference type="PDB" id="6RBD">
    <property type="method" value="EM"/>
    <property type="resolution" value="3.47 A"/>
    <property type="chains" value="L=1-156"/>
</dbReference>
<dbReference type="PDB" id="6RBE">
    <property type="method" value="EM"/>
    <property type="resolution" value="3.80 A"/>
    <property type="chains" value="L=1-156"/>
</dbReference>
<dbReference type="PDB" id="6S47">
    <property type="method" value="EM"/>
    <property type="resolution" value="3.28 A"/>
    <property type="chains" value="BM=2-156"/>
</dbReference>
<dbReference type="PDB" id="6SNT">
    <property type="method" value="EM"/>
    <property type="resolution" value="2.80 A"/>
    <property type="chains" value="L=1-156"/>
</dbReference>
<dbReference type="PDB" id="6SV4">
    <property type="method" value="EM"/>
    <property type="resolution" value="3.30 A"/>
    <property type="chains" value="X/Xb/Xc=1-156"/>
</dbReference>
<dbReference type="PDB" id="6T4Q">
    <property type="method" value="EM"/>
    <property type="resolution" value="2.60 A"/>
    <property type="chains" value="SL=2-145"/>
</dbReference>
<dbReference type="PDB" id="6T7I">
    <property type="method" value="EM"/>
    <property type="resolution" value="3.20 A"/>
    <property type="chains" value="SL=1-156"/>
</dbReference>
<dbReference type="PDB" id="6T7T">
    <property type="method" value="EM"/>
    <property type="resolution" value="3.10 A"/>
    <property type="chains" value="SL=1-156"/>
</dbReference>
<dbReference type="PDB" id="6T83">
    <property type="method" value="EM"/>
    <property type="resolution" value="4.00 A"/>
    <property type="chains" value="Lb/m=1-156"/>
</dbReference>
<dbReference type="PDB" id="6TB3">
    <property type="method" value="EM"/>
    <property type="resolution" value="2.80 A"/>
    <property type="chains" value="X=4-145"/>
</dbReference>
<dbReference type="PDB" id="6TNU">
    <property type="method" value="EM"/>
    <property type="resolution" value="3.10 A"/>
    <property type="chains" value="X=4-145"/>
</dbReference>
<dbReference type="PDB" id="6WDR">
    <property type="method" value="EM"/>
    <property type="resolution" value="3.70 A"/>
    <property type="chains" value="L=6-145"/>
</dbReference>
<dbReference type="PDB" id="6WOO">
    <property type="method" value="EM"/>
    <property type="resolution" value="2.90 A"/>
    <property type="chains" value="LL=2-145"/>
</dbReference>
<dbReference type="PDB" id="6XIQ">
    <property type="method" value="EM"/>
    <property type="resolution" value="4.20 A"/>
    <property type="chains" value="AB=1-156"/>
</dbReference>
<dbReference type="PDB" id="6XIR">
    <property type="method" value="EM"/>
    <property type="resolution" value="3.20 A"/>
    <property type="chains" value="AB=1-156"/>
</dbReference>
<dbReference type="PDB" id="6Y7C">
    <property type="method" value="EM"/>
    <property type="resolution" value="3.80 A"/>
    <property type="chains" value="L=1-156"/>
</dbReference>
<dbReference type="PDB" id="6Z6J">
    <property type="method" value="EM"/>
    <property type="resolution" value="3.40 A"/>
    <property type="chains" value="SL=1-156"/>
</dbReference>
<dbReference type="PDB" id="6Z6K">
    <property type="method" value="EM"/>
    <property type="resolution" value="3.40 A"/>
    <property type="chains" value="SL=1-156"/>
</dbReference>
<dbReference type="PDB" id="6ZCE">
    <property type="method" value="EM"/>
    <property type="resolution" value="5.30 A"/>
    <property type="chains" value="M=2-156"/>
</dbReference>
<dbReference type="PDB" id="6ZQB">
    <property type="method" value="EM"/>
    <property type="resolution" value="3.90 A"/>
    <property type="chains" value="DL=1-156"/>
</dbReference>
<dbReference type="PDB" id="6ZQC">
    <property type="method" value="EM"/>
    <property type="resolution" value="3.80 A"/>
    <property type="chains" value="DL=1-156"/>
</dbReference>
<dbReference type="PDB" id="6ZQD">
    <property type="method" value="EM"/>
    <property type="resolution" value="3.80 A"/>
    <property type="chains" value="DL=1-156"/>
</dbReference>
<dbReference type="PDB" id="6ZQE">
    <property type="method" value="EM"/>
    <property type="resolution" value="7.10 A"/>
    <property type="chains" value="DL=1-156"/>
</dbReference>
<dbReference type="PDB" id="6ZQF">
    <property type="method" value="EM"/>
    <property type="resolution" value="4.90 A"/>
    <property type="chains" value="DL=1-156"/>
</dbReference>
<dbReference type="PDB" id="6ZQG">
    <property type="method" value="EM"/>
    <property type="resolution" value="3.50 A"/>
    <property type="chains" value="DL=1-156"/>
</dbReference>
<dbReference type="PDB" id="6ZU9">
    <property type="method" value="EM"/>
    <property type="resolution" value="6.20 A"/>
    <property type="chains" value="X=2-156"/>
</dbReference>
<dbReference type="PDB" id="6ZVI">
    <property type="method" value="EM"/>
    <property type="resolution" value="3.00 A"/>
    <property type="chains" value="t=2-147"/>
</dbReference>
<dbReference type="PDB" id="7A1G">
    <property type="method" value="EM"/>
    <property type="resolution" value="3.00 A"/>
    <property type="chains" value="X=4-145"/>
</dbReference>
<dbReference type="PDB" id="7AJT">
    <property type="method" value="EM"/>
    <property type="resolution" value="4.60 A"/>
    <property type="chains" value="DL=1-156"/>
</dbReference>
<dbReference type="PDB" id="7AJU">
    <property type="method" value="EM"/>
    <property type="resolution" value="3.80 A"/>
    <property type="chains" value="DL=1-156"/>
</dbReference>
<dbReference type="PDB" id="7B7D">
    <property type="method" value="EM"/>
    <property type="resolution" value="3.30 A"/>
    <property type="chains" value="X=4-145"/>
</dbReference>
<dbReference type="PDB" id="7D4I">
    <property type="method" value="EM"/>
    <property type="resolution" value="4.00 A"/>
    <property type="chains" value="SM=1-156"/>
</dbReference>
<dbReference type="PDB" id="7D5T">
    <property type="method" value="EM"/>
    <property type="resolution" value="6.00 A"/>
    <property type="chains" value="SM=1-156"/>
</dbReference>
<dbReference type="PDB" id="7D63">
    <property type="method" value="EM"/>
    <property type="resolution" value="12.30 A"/>
    <property type="chains" value="SM=1-155"/>
</dbReference>
<dbReference type="PDB" id="7MPI">
    <property type="method" value="EM"/>
    <property type="resolution" value="3.05 A"/>
    <property type="chains" value="BL=2-156"/>
</dbReference>
<dbReference type="PDB" id="7MPJ">
    <property type="method" value="EM"/>
    <property type="resolution" value="2.70 A"/>
    <property type="chains" value="BL=2-156"/>
</dbReference>
<dbReference type="PDB" id="7N8B">
    <property type="method" value="EM"/>
    <property type="resolution" value="3.05 A"/>
    <property type="chains" value="BL=2-156"/>
</dbReference>
<dbReference type="PDB" id="7NRC">
    <property type="method" value="EM"/>
    <property type="resolution" value="3.90 A"/>
    <property type="chains" value="SX=4-145"/>
</dbReference>
<dbReference type="PDB" id="7NRD">
    <property type="method" value="EM"/>
    <property type="resolution" value="4.36 A"/>
    <property type="chains" value="SX=2-147"/>
</dbReference>
<dbReference type="PDB" id="7SUK">
    <property type="method" value="EM"/>
    <property type="resolution" value="3.99 A"/>
    <property type="chains" value="LD=1-156"/>
</dbReference>
<dbReference type="PDB" id="7WTL">
    <property type="method" value="EM"/>
    <property type="resolution" value="3.30 A"/>
    <property type="chains" value="SL=1-156"/>
</dbReference>
<dbReference type="PDB" id="7WTM">
    <property type="method" value="EM"/>
    <property type="resolution" value="3.50 A"/>
    <property type="chains" value="SL=1-156"/>
</dbReference>
<dbReference type="PDB" id="7WTN">
    <property type="method" value="EM"/>
    <property type="resolution" value="3.40 A"/>
    <property type="chains" value="SL=1-156"/>
</dbReference>
<dbReference type="PDB" id="7WTO">
    <property type="method" value="EM"/>
    <property type="resolution" value="3.50 A"/>
    <property type="chains" value="SL=1-156"/>
</dbReference>
<dbReference type="PDB" id="7WTP">
    <property type="method" value="EM"/>
    <property type="resolution" value="3.80 A"/>
    <property type="chains" value="SL=1-156"/>
</dbReference>
<dbReference type="PDB" id="7WTQ">
    <property type="method" value="EM"/>
    <property type="resolution" value="3.70 A"/>
    <property type="chains" value="SL=1-156"/>
</dbReference>
<dbReference type="PDB" id="7WTR">
    <property type="method" value="EM"/>
    <property type="resolution" value="3.50 A"/>
    <property type="chains" value="SL=1-156"/>
</dbReference>
<dbReference type="PDB" id="7ZPQ">
    <property type="method" value="EM"/>
    <property type="resolution" value="3.47 A"/>
    <property type="chains" value="AL=2-145"/>
</dbReference>
<dbReference type="PDB" id="7ZRS">
    <property type="method" value="EM"/>
    <property type="resolution" value="4.80 A"/>
    <property type="chains" value="AL=2-145"/>
</dbReference>
<dbReference type="PDB" id="7ZUW">
    <property type="method" value="EM"/>
    <property type="resolution" value="4.30 A"/>
    <property type="chains" value="AL=2-145"/>
</dbReference>
<dbReference type="PDB" id="7ZUX">
    <property type="method" value="EM"/>
    <property type="resolution" value="2.50 A"/>
    <property type="chains" value="DL=2-145"/>
</dbReference>
<dbReference type="PDB" id="7ZW0">
    <property type="method" value="EM"/>
    <property type="resolution" value="2.40 A"/>
    <property type="chains" value="sX=1-156"/>
</dbReference>
<dbReference type="PDB" id="8BN3">
    <property type="method" value="EM"/>
    <property type="resolution" value="2.40 A"/>
    <property type="chains" value="C1=2-156"/>
</dbReference>
<dbReference type="PDB" id="8BQD">
    <property type="method" value="EM"/>
    <property type="resolution" value="3.90 A"/>
    <property type="chains" value="X=4-145"/>
</dbReference>
<dbReference type="PDB" id="8BQX">
    <property type="method" value="EM"/>
    <property type="resolution" value="3.80 A"/>
    <property type="chains" value="X=4-145"/>
</dbReference>
<dbReference type="PDB" id="8C00">
    <property type="method" value="EM"/>
    <property type="resolution" value="2.90 A"/>
    <property type="chains" value="X=1-156"/>
</dbReference>
<dbReference type="PDB" id="8C01">
    <property type="method" value="EM"/>
    <property type="resolution" value="2.70 A"/>
    <property type="chains" value="X=1-156"/>
</dbReference>
<dbReference type="PDB" id="8C83">
    <property type="method" value="EM"/>
    <property type="resolution" value="3.00 A"/>
    <property type="chains" value="X=1-156"/>
</dbReference>
<dbReference type="PDB" id="8CAH">
    <property type="method" value="EM"/>
    <property type="resolution" value="3.00 A"/>
    <property type="chains" value="X=1-156"/>
</dbReference>
<dbReference type="PDB" id="8CAS">
    <property type="method" value="EM"/>
    <property type="resolution" value="3.30 A"/>
    <property type="chains" value="X=1-156"/>
</dbReference>
<dbReference type="PDB" id="8CBJ">
    <property type="method" value="EM"/>
    <property type="resolution" value="3.80 A"/>
    <property type="chains" value="L=1-156"/>
</dbReference>
<dbReference type="PDB" id="8CCS">
    <property type="method" value="EM"/>
    <property type="resolution" value="1.97 A"/>
    <property type="chains" value="o=1-156"/>
</dbReference>
<dbReference type="PDB" id="8CDL">
    <property type="method" value="EM"/>
    <property type="resolution" value="2.72 A"/>
    <property type="chains" value="o=1-156"/>
</dbReference>
<dbReference type="PDB" id="8CDR">
    <property type="method" value="EM"/>
    <property type="resolution" value="2.04 A"/>
    <property type="chains" value="o=1-156"/>
</dbReference>
<dbReference type="PDB" id="8CEH">
    <property type="method" value="EM"/>
    <property type="resolution" value="2.05 A"/>
    <property type="chains" value="o=1-156"/>
</dbReference>
<dbReference type="PDB" id="8CF5">
    <property type="method" value="EM"/>
    <property type="resolution" value="2.71 A"/>
    <property type="chains" value="o=1-156"/>
</dbReference>
<dbReference type="PDB" id="8CG8">
    <property type="method" value="EM"/>
    <property type="resolution" value="2.57 A"/>
    <property type="chains" value="o=1-156"/>
</dbReference>
<dbReference type="PDB" id="8CGN">
    <property type="method" value="EM"/>
    <property type="resolution" value="2.28 A"/>
    <property type="chains" value="o=1-156"/>
</dbReference>
<dbReference type="PDB" id="8CIV">
    <property type="method" value="EM"/>
    <property type="resolution" value="2.47 A"/>
    <property type="chains" value="o=1-156"/>
</dbReference>
<dbReference type="PDB" id="8CKU">
    <property type="method" value="EM"/>
    <property type="resolution" value="3.11 A"/>
    <property type="chains" value="o=1-156"/>
</dbReference>
<dbReference type="PDB" id="8CMJ">
    <property type="method" value="EM"/>
    <property type="resolution" value="3.79 A"/>
    <property type="chains" value="o=1-156"/>
</dbReference>
<dbReference type="PDB" id="8EUB">
    <property type="method" value="EM"/>
    <property type="resolution" value="2.52 A"/>
    <property type="chains" value="BL=1-156"/>
</dbReference>
<dbReference type="PDB" id="8EVP">
    <property type="method" value="EM"/>
    <property type="resolution" value="2.38 A"/>
    <property type="chains" value="BL=1-156"/>
</dbReference>
<dbReference type="PDB" id="8EVQ">
    <property type="method" value="EM"/>
    <property type="resolution" value="2.72 A"/>
    <property type="chains" value="BL=1-156"/>
</dbReference>
<dbReference type="PDB" id="8EVR">
    <property type="method" value="EM"/>
    <property type="resolution" value="2.87 A"/>
    <property type="chains" value="BL=1-156"/>
</dbReference>
<dbReference type="PDB" id="8EVS">
    <property type="method" value="EM"/>
    <property type="resolution" value="2.62 A"/>
    <property type="chains" value="BL=1-156"/>
</dbReference>
<dbReference type="PDB" id="8EVT">
    <property type="method" value="EM"/>
    <property type="resolution" value="2.20 A"/>
    <property type="chains" value="BL=1-156"/>
</dbReference>
<dbReference type="PDB" id="8EWB">
    <property type="method" value="EM"/>
    <property type="resolution" value="2.87 A"/>
    <property type="chains" value="BL=1-156"/>
</dbReference>
<dbReference type="PDB" id="8EWC">
    <property type="method" value="EM"/>
    <property type="resolution" value="2.45 A"/>
    <property type="chains" value="BL=1-156"/>
</dbReference>
<dbReference type="PDB" id="8K2D">
    <property type="method" value="EM"/>
    <property type="resolution" value="3.20 A"/>
    <property type="chains" value="SL=1-156"/>
</dbReference>
<dbReference type="PDB" id="8K82">
    <property type="method" value="EM"/>
    <property type="resolution" value="3.00 A"/>
    <property type="chains" value="SL=1-156"/>
</dbReference>
<dbReference type="PDB" id="8P4V">
    <property type="method" value="X-ray"/>
    <property type="resolution" value="3.16 A"/>
    <property type="chains" value="M/c1=1-156"/>
</dbReference>
<dbReference type="PDB" id="8P9A">
    <property type="method" value="X-ray"/>
    <property type="resolution" value="2.90 A"/>
    <property type="chains" value="M/c1=1-156"/>
</dbReference>
<dbReference type="PDB" id="8T2X">
    <property type="method" value="EM"/>
    <property type="resolution" value="2.46 A"/>
    <property type="chains" value="BL=1-156"/>
</dbReference>
<dbReference type="PDB" id="8T2Y">
    <property type="method" value="EM"/>
    <property type="resolution" value="2.20 A"/>
    <property type="chains" value="BL=1-156"/>
</dbReference>
<dbReference type="PDB" id="8T2Z">
    <property type="method" value="EM"/>
    <property type="resolution" value="2.40 A"/>
    <property type="chains" value="BL=1-156"/>
</dbReference>
<dbReference type="PDB" id="8T30">
    <property type="method" value="EM"/>
    <property type="resolution" value="2.88 A"/>
    <property type="chains" value="BL=1-156"/>
</dbReference>
<dbReference type="PDB" id="8T3A">
    <property type="method" value="EM"/>
    <property type="resolution" value="2.86 A"/>
    <property type="chains" value="BL=1-156"/>
</dbReference>
<dbReference type="PDB" id="8T3B">
    <property type="method" value="EM"/>
    <property type="resolution" value="3.08 A"/>
    <property type="chains" value="BL=1-156"/>
</dbReference>
<dbReference type="PDB" id="8T3C">
    <property type="method" value="EM"/>
    <property type="resolution" value="3.86 A"/>
    <property type="chains" value="BL=1-156"/>
</dbReference>
<dbReference type="PDB" id="8T3D">
    <property type="method" value="EM"/>
    <property type="resolution" value="2.95 A"/>
    <property type="chains" value="BL=1-156"/>
</dbReference>
<dbReference type="PDB" id="8T3E">
    <property type="method" value="EM"/>
    <property type="resolution" value="3.04 A"/>
    <property type="chains" value="BL=1-156"/>
</dbReference>
<dbReference type="PDB" id="8T3F">
    <property type="method" value="EM"/>
    <property type="resolution" value="3.09 A"/>
    <property type="chains" value="BL=1-156"/>
</dbReference>
<dbReference type="PDB" id="8UT0">
    <property type="method" value="EM"/>
    <property type="resolution" value="3.22 A"/>
    <property type="chains" value="SX=4-145"/>
</dbReference>
<dbReference type="PDB" id="8UTI">
    <property type="method" value="EM"/>
    <property type="resolution" value="3.13 A"/>
    <property type="chains" value="SX=4-145"/>
</dbReference>
<dbReference type="PDB" id="8XU8">
    <property type="method" value="EM"/>
    <property type="resolution" value="3.40 A"/>
    <property type="chains" value="SX=4-145"/>
</dbReference>
<dbReference type="PDB" id="8Y0U">
    <property type="method" value="EM"/>
    <property type="resolution" value="3.59 A"/>
    <property type="chains" value="SL=1-156"/>
</dbReference>
<dbReference type="PDB" id="8YLD">
    <property type="method" value="EM"/>
    <property type="resolution" value="3.90 A"/>
    <property type="chains" value="SX=4-145"/>
</dbReference>
<dbReference type="PDB" id="8YLR">
    <property type="method" value="EM"/>
    <property type="resolution" value="3.90 A"/>
    <property type="chains" value="SX=4-145"/>
</dbReference>
<dbReference type="PDB" id="8Z70">
    <property type="method" value="EM"/>
    <property type="resolution" value="3.20 A"/>
    <property type="chains" value="SX=4-145"/>
</dbReference>
<dbReference type="PDB" id="8Z71">
    <property type="method" value="EM"/>
    <property type="resolution" value="3.60 A"/>
    <property type="chains" value="SX=4-145"/>
</dbReference>
<dbReference type="PDB" id="9F9S">
    <property type="method" value="EM"/>
    <property type="resolution" value="2.90 A"/>
    <property type="chains" value="Rl/Sl=1-156"/>
</dbReference>
<dbReference type="PDBsum" id="3J6X"/>
<dbReference type="PDBsum" id="3J6Y"/>
<dbReference type="PDBsum" id="3J77"/>
<dbReference type="PDBsum" id="3J78"/>
<dbReference type="PDBsum" id="4U3M"/>
<dbReference type="PDBsum" id="4U3N"/>
<dbReference type="PDBsum" id="4U3U"/>
<dbReference type="PDBsum" id="4U4N"/>
<dbReference type="PDBsum" id="4U4O"/>
<dbReference type="PDBsum" id="4U4Q"/>
<dbReference type="PDBsum" id="4U4R"/>
<dbReference type="PDBsum" id="4U4U"/>
<dbReference type="PDBsum" id="4U4Y"/>
<dbReference type="PDBsum" id="4U4Z"/>
<dbReference type="PDBsum" id="4U50"/>
<dbReference type="PDBsum" id="4U51"/>
<dbReference type="PDBsum" id="4U52"/>
<dbReference type="PDBsum" id="4U53"/>
<dbReference type="PDBsum" id="4U55"/>
<dbReference type="PDBsum" id="4U56"/>
<dbReference type="PDBsum" id="4U6F"/>
<dbReference type="PDBsum" id="4V4B"/>
<dbReference type="PDBsum" id="4V5Z"/>
<dbReference type="PDBsum" id="4V6I"/>
<dbReference type="PDBsum" id="4V7R"/>
<dbReference type="PDBsum" id="4V88"/>
<dbReference type="PDBsum" id="4V8Y"/>
<dbReference type="PDBsum" id="4V8Z"/>
<dbReference type="PDBsum" id="4V92"/>
<dbReference type="PDBsum" id="5DAT"/>
<dbReference type="PDBsum" id="5DC3"/>
<dbReference type="PDBsum" id="5DGE"/>
<dbReference type="PDBsum" id="5DGF"/>
<dbReference type="PDBsum" id="5DGV"/>
<dbReference type="PDBsum" id="5FCI"/>
<dbReference type="PDBsum" id="5FCJ"/>
<dbReference type="PDBsum" id="5I4L"/>
<dbReference type="PDBsum" id="5JUO"/>
<dbReference type="PDBsum" id="5JUP"/>
<dbReference type="PDBsum" id="5JUS"/>
<dbReference type="PDBsum" id="5JUT"/>
<dbReference type="PDBsum" id="5JUU"/>
<dbReference type="PDBsum" id="5LL6"/>
<dbReference type="PDBsum" id="5LYB"/>
<dbReference type="PDBsum" id="5M1J"/>
<dbReference type="PDBsum" id="5MC6"/>
<dbReference type="PDBsum" id="5MEI"/>
<dbReference type="PDBsum" id="5NDG"/>
<dbReference type="PDBsum" id="5NDV"/>
<dbReference type="PDBsum" id="5NDW"/>
<dbReference type="PDBsum" id="5OBM"/>
<dbReference type="PDBsum" id="5ON6"/>
<dbReference type="PDBsum" id="5TBW"/>
<dbReference type="PDBsum" id="5TGA"/>
<dbReference type="PDBsum" id="5TGM"/>
<dbReference type="PDBsum" id="5TZS"/>
<dbReference type="PDBsum" id="5WLC"/>
<dbReference type="PDBsum" id="5WYJ"/>
<dbReference type="PDBsum" id="5WYK"/>
<dbReference type="PDBsum" id="6EML"/>
<dbReference type="PDBsum" id="6FAI"/>
<dbReference type="PDBsum" id="6GQ1"/>
<dbReference type="PDBsum" id="6GQB"/>
<dbReference type="PDBsum" id="6GQV"/>
<dbReference type="PDBsum" id="6HHQ"/>
<dbReference type="PDBsum" id="6I7O"/>
<dbReference type="PDBsum" id="6KE6"/>
<dbReference type="PDBsum" id="6LQP"/>
<dbReference type="PDBsum" id="6LQQ"/>
<dbReference type="PDBsum" id="6LQR"/>
<dbReference type="PDBsum" id="6LQS"/>
<dbReference type="PDBsum" id="6LQT"/>
<dbReference type="PDBsum" id="6LQU"/>
<dbReference type="PDBsum" id="6LQV"/>
<dbReference type="PDBsum" id="6Q8Y"/>
<dbReference type="PDBsum" id="6RBD"/>
<dbReference type="PDBsum" id="6RBE"/>
<dbReference type="PDBsum" id="6S47"/>
<dbReference type="PDBsum" id="6SNT"/>
<dbReference type="PDBsum" id="6SV4"/>
<dbReference type="PDBsum" id="6T4Q"/>
<dbReference type="PDBsum" id="6T7I"/>
<dbReference type="PDBsum" id="6T7T"/>
<dbReference type="PDBsum" id="6T83"/>
<dbReference type="PDBsum" id="6TB3"/>
<dbReference type="PDBsum" id="6TNU"/>
<dbReference type="PDBsum" id="6WDR"/>
<dbReference type="PDBsum" id="6WOO"/>
<dbReference type="PDBsum" id="6XIQ"/>
<dbReference type="PDBsum" id="6XIR"/>
<dbReference type="PDBsum" id="6Y7C"/>
<dbReference type="PDBsum" id="6Z6J"/>
<dbReference type="PDBsum" id="6Z6K"/>
<dbReference type="PDBsum" id="6ZCE"/>
<dbReference type="PDBsum" id="6ZQB"/>
<dbReference type="PDBsum" id="6ZQC"/>
<dbReference type="PDBsum" id="6ZQD"/>
<dbReference type="PDBsum" id="6ZQE"/>
<dbReference type="PDBsum" id="6ZQF"/>
<dbReference type="PDBsum" id="6ZQG"/>
<dbReference type="PDBsum" id="6ZU9"/>
<dbReference type="PDBsum" id="6ZVI"/>
<dbReference type="PDBsum" id="7A1G"/>
<dbReference type="PDBsum" id="7AJT"/>
<dbReference type="PDBsum" id="7AJU"/>
<dbReference type="PDBsum" id="7B7D"/>
<dbReference type="PDBsum" id="7D4I"/>
<dbReference type="PDBsum" id="7D5T"/>
<dbReference type="PDBsum" id="7D63"/>
<dbReference type="PDBsum" id="7MPI"/>
<dbReference type="PDBsum" id="7MPJ"/>
<dbReference type="PDBsum" id="7N8B"/>
<dbReference type="PDBsum" id="7NRC"/>
<dbReference type="PDBsum" id="7NRD"/>
<dbReference type="PDBsum" id="7SUK"/>
<dbReference type="PDBsum" id="7WTL"/>
<dbReference type="PDBsum" id="7WTM"/>
<dbReference type="PDBsum" id="7WTN"/>
<dbReference type="PDBsum" id="7WTO"/>
<dbReference type="PDBsum" id="7WTP"/>
<dbReference type="PDBsum" id="7WTQ"/>
<dbReference type="PDBsum" id="7WTR"/>
<dbReference type="PDBsum" id="7ZPQ"/>
<dbReference type="PDBsum" id="7ZRS"/>
<dbReference type="PDBsum" id="7ZUW"/>
<dbReference type="PDBsum" id="7ZUX"/>
<dbReference type="PDBsum" id="7ZW0"/>
<dbReference type="PDBsum" id="8BN3"/>
<dbReference type="PDBsum" id="8BQD"/>
<dbReference type="PDBsum" id="8BQX"/>
<dbReference type="PDBsum" id="8C00"/>
<dbReference type="PDBsum" id="8C01"/>
<dbReference type="PDBsum" id="8C83"/>
<dbReference type="PDBsum" id="8CAH"/>
<dbReference type="PDBsum" id="8CAS"/>
<dbReference type="PDBsum" id="8CBJ"/>
<dbReference type="PDBsum" id="8CCS"/>
<dbReference type="PDBsum" id="8CDL"/>
<dbReference type="PDBsum" id="8CDR"/>
<dbReference type="PDBsum" id="8CEH"/>
<dbReference type="PDBsum" id="8CF5"/>
<dbReference type="PDBsum" id="8CG8"/>
<dbReference type="PDBsum" id="8CGN"/>
<dbReference type="PDBsum" id="8CIV"/>
<dbReference type="PDBsum" id="8CKU"/>
<dbReference type="PDBsum" id="8CMJ"/>
<dbReference type="PDBsum" id="8EUB"/>
<dbReference type="PDBsum" id="8EVP"/>
<dbReference type="PDBsum" id="8EVQ"/>
<dbReference type="PDBsum" id="8EVR"/>
<dbReference type="PDBsum" id="8EVS"/>
<dbReference type="PDBsum" id="8EVT"/>
<dbReference type="PDBsum" id="8EWB"/>
<dbReference type="PDBsum" id="8EWC"/>
<dbReference type="PDBsum" id="8K2D"/>
<dbReference type="PDBsum" id="8K82"/>
<dbReference type="PDBsum" id="8P4V"/>
<dbReference type="PDBsum" id="8P9A"/>
<dbReference type="PDBsum" id="8T2X"/>
<dbReference type="PDBsum" id="8T2Y"/>
<dbReference type="PDBsum" id="8T2Z"/>
<dbReference type="PDBsum" id="8T30"/>
<dbReference type="PDBsum" id="8T3A"/>
<dbReference type="PDBsum" id="8T3B"/>
<dbReference type="PDBsum" id="8T3C"/>
<dbReference type="PDBsum" id="8T3D"/>
<dbReference type="PDBsum" id="8T3E"/>
<dbReference type="PDBsum" id="8T3F"/>
<dbReference type="PDBsum" id="8UT0"/>
<dbReference type="PDBsum" id="8UTI"/>
<dbReference type="PDBsum" id="8XU8"/>
<dbReference type="PDBsum" id="8Y0U"/>
<dbReference type="PDBsum" id="8YLD"/>
<dbReference type="PDBsum" id="8YLR"/>
<dbReference type="PDBsum" id="8Z70"/>
<dbReference type="PDBsum" id="8Z71"/>
<dbReference type="PDBsum" id="9F9S"/>
<dbReference type="EMDB" id="EMD-0047"/>
<dbReference type="EMDB" id="EMD-0048"/>
<dbReference type="EMDB" id="EMD-0049"/>
<dbReference type="EMDB" id="EMD-0949"/>
<dbReference type="EMDB" id="EMD-0950"/>
<dbReference type="EMDB" id="EMD-0951"/>
<dbReference type="EMDB" id="EMD-0952"/>
<dbReference type="EMDB" id="EMD-0953"/>
<dbReference type="EMDB" id="EMD-0954"/>
<dbReference type="EMDB" id="EMD-0955"/>
<dbReference type="EMDB" id="EMD-10098"/>
<dbReference type="EMDB" id="EMD-10262"/>
<dbReference type="EMDB" id="EMD-10315"/>
<dbReference type="EMDB" id="EMD-10377"/>
<dbReference type="EMDB" id="EMD-10396"/>
<dbReference type="EMDB" id="EMD-10397"/>
<dbReference type="EMDB" id="EMD-10398"/>
<dbReference type="EMDB" id="EMD-10431"/>
<dbReference type="EMDB" id="EMD-10537"/>
<dbReference type="EMDB" id="EMD-10713"/>
<dbReference type="EMDB" id="EMD-11096"/>
<dbReference type="EMDB" id="EMD-11097"/>
<dbReference type="EMDB" id="EMD-11160"/>
<dbReference type="EMDB" id="EMD-11358"/>
<dbReference type="EMDB" id="EMD-11359"/>
<dbReference type="EMDB" id="EMD-11360"/>
<dbReference type="EMDB" id="EMD-11361"/>
<dbReference type="EMDB" id="EMD-11362"/>
<dbReference type="EMDB" id="EMD-11363"/>
<dbReference type="EMDB" id="EMD-11439"/>
<dbReference type="EMDB" id="EMD-11457"/>
<dbReference type="EMDB" id="EMD-11608"/>
<dbReference type="EMDB" id="EMD-11807"/>
<dbReference type="EMDB" id="EMD-11808"/>
<dbReference type="EMDB" id="EMD-12081"/>
<dbReference type="EMDB" id="EMD-12534"/>
<dbReference type="EMDB" id="EMD-12535"/>
<dbReference type="EMDB" id="EMD-14861"/>
<dbReference type="EMDB" id="EMD-14921"/>
<dbReference type="EMDB" id="EMD-14978"/>
<dbReference type="EMDB" id="EMD-14979"/>
<dbReference type="EMDB" id="EMD-14990"/>
<dbReference type="EMDB" id="EMD-16127"/>
<dbReference type="EMDB" id="EMD-16182"/>
<dbReference type="EMDB" id="EMD-16191"/>
<dbReference type="EMDB" id="EMD-16347"/>
<dbReference type="EMDB" id="EMD-16349"/>
<dbReference type="EMDB" id="EMD-16470"/>
<dbReference type="EMDB" id="EMD-16525"/>
<dbReference type="EMDB" id="EMD-16533"/>
<dbReference type="EMDB" id="EMD-16541"/>
<dbReference type="EMDB" id="EMD-16563"/>
<dbReference type="EMDB" id="EMD-16591"/>
<dbReference type="EMDB" id="EMD-16594"/>
<dbReference type="EMDB" id="EMD-16609"/>
<dbReference type="EMDB" id="EMD-16616"/>
<dbReference type="EMDB" id="EMD-16634"/>
<dbReference type="EMDB" id="EMD-16648"/>
<dbReference type="EMDB" id="EMD-16684"/>
<dbReference type="EMDB" id="EMD-16702"/>
<dbReference type="EMDB" id="EMD-16729"/>
<dbReference type="EMDB" id="EMD-21644"/>
<dbReference type="EMDB" id="EMD-21859"/>
<dbReference type="EMDB" id="EMD-22196"/>
<dbReference type="EMDB" id="EMD-22198"/>
<dbReference type="EMDB" id="EMD-23934"/>
<dbReference type="EMDB" id="EMD-23935"/>
<dbReference type="EMDB" id="EMD-24235"/>
<dbReference type="EMDB" id="EMD-25441"/>
<dbReference type="EMDB" id="EMD-28610"/>
<dbReference type="EMDB" id="EMD-28632"/>
<dbReference type="EMDB" id="EMD-28633"/>
<dbReference type="EMDB" id="EMD-28634"/>
<dbReference type="EMDB" id="EMD-28635"/>
<dbReference type="EMDB" id="EMD-28636"/>
<dbReference type="EMDB" id="EMD-28642"/>
<dbReference type="EMDB" id="EMD-28643"/>
<dbReference type="EMDB" id="EMD-30574"/>
<dbReference type="EMDB" id="EMD-30585"/>
<dbReference type="EMDB" id="EMD-30588"/>
<dbReference type="EMDB" id="EMD-32790"/>
<dbReference type="EMDB" id="EMD-32791"/>
<dbReference type="EMDB" id="EMD-32792"/>
<dbReference type="EMDB" id="EMD-32793"/>
<dbReference type="EMDB" id="EMD-32794"/>
<dbReference type="EMDB" id="EMD-32795"/>
<dbReference type="EMDB" id="EMD-32796"/>
<dbReference type="EMDB" id="EMD-3461"/>
<dbReference type="EMDB" id="EMD-36839"/>
<dbReference type="EMDB" id="EMD-36945"/>
<dbReference type="EMDB" id="EMD-38660"/>
<dbReference type="EMDB" id="EMD-40990"/>
<dbReference type="EMDB" id="EMD-40991"/>
<dbReference type="EMDB" id="EMD-40992"/>
<dbReference type="EMDB" id="EMD-40993"/>
<dbReference type="EMDB" id="EMD-40997"/>
<dbReference type="EMDB" id="EMD-40998"/>
<dbReference type="EMDB" id="EMD-40999"/>
<dbReference type="EMDB" id="EMD-41000"/>
<dbReference type="EMDB" id="EMD-41001"/>
<dbReference type="EMDB" id="EMD-41002"/>
<dbReference type="EMDB" id="EMD-4140"/>
<dbReference type="EMDB" id="EMD-4214"/>
<dbReference type="EMDB" id="EMD-42525"/>
<dbReference type="EMDB" id="EMD-42540"/>
<dbReference type="EMDB" id="EMD-4427"/>
<dbReference type="EMDB" id="EMD-4474"/>
<dbReference type="EMDB" id="EMD-4792"/>
<dbReference type="EMDB" id="EMD-4793"/>
<dbReference type="EMDB" id="EMD-50259"/>
<dbReference type="EMDB" id="EMD-6695"/>
<dbReference type="EMDB" id="EMD-6696"/>
<dbReference type="EMDB" id="EMD-8473"/>
<dbReference type="EMDB" id="EMD-8859"/>
<dbReference type="EMDB" id="EMD-9964"/>
<dbReference type="SMR" id="P0CX47"/>
<dbReference type="BioGRID" id="32075">
    <property type="interactions" value="271"/>
</dbReference>
<dbReference type="BioGRID" id="32750">
    <property type="interactions" value="354"/>
</dbReference>
<dbReference type="ComplexPortal" id="CPX-1599">
    <property type="entry name" value="40S cytosolic small ribosomal subunit"/>
</dbReference>
<dbReference type="FunCoup" id="P0CX47">
    <property type="interactions" value="1424"/>
</dbReference>
<dbReference type="IntAct" id="P0CX47">
    <property type="interactions" value="7"/>
</dbReference>
<dbReference type="MINT" id="P0CX47"/>
<dbReference type="STRING" id="4932.YBR048W"/>
<dbReference type="iPTMnet" id="P0CX47"/>
<dbReference type="PaxDb" id="4932-YBR048W"/>
<dbReference type="PeptideAtlas" id="P0CX47"/>
<dbReference type="EnsemblFungi" id="YBR048W_mRNA">
    <property type="protein sequence ID" value="YBR048W"/>
    <property type="gene ID" value="YBR048W"/>
</dbReference>
<dbReference type="EnsemblFungi" id="YDR025W_mRNA">
    <property type="protein sequence ID" value="YDR025W"/>
    <property type="gene ID" value="YDR025W"/>
</dbReference>
<dbReference type="GeneID" id="851589"/>
<dbReference type="KEGG" id="sce:YBR048W"/>
<dbReference type="KEGG" id="sce:YDR025W"/>
<dbReference type="AGR" id="SGD:S000002432"/>
<dbReference type="SGD" id="S000002432">
    <property type="gene designation" value="RPS11A"/>
</dbReference>
<dbReference type="VEuPathDB" id="FungiDB:YBR048W"/>
<dbReference type="VEuPathDB" id="FungiDB:YDR025W"/>
<dbReference type="eggNOG" id="KOG1728">
    <property type="taxonomic scope" value="Eukaryota"/>
</dbReference>
<dbReference type="HOGENOM" id="CLU_073626_0_2_1"/>
<dbReference type="InParanoid" id="P0CX47"/>
<dbReference type="OMA" id="DYEKCPF"/>
<dbReference type="OrthoDB" id="10254436at2759"/>
<dbReference type="BioCyc" id="YEAST:G3O-29641-MONOMER"/>
<dbReference type="Reactome" id="R-SCE-156827">
    <property type="pathway name" value="L13a-mediated translational silencing of Ceruloplasmin expression"/>
</dbReference>
<dbReference type="Reactome" id="R-SCE-1799339">
    <property type="pathway name" value="SRP-dependent cotranslational protein targeting to membrane"/>
</dbReference>
<dbReference type="Reactome" id="R-SCE-72649">
    <property type="pathway name" value="Translation initiation complex formation"/>
</dbReference>
<dbReference type="Reactome" id="R-SCE-72689">
    <property type="pathway name" value="Formation of a pool of free 40S subunits"/>
</dbReference>
<dbReference type="Reactome" id="R-SCE-72695">
    <property type="pathway name" value="Formation of the ternary complex, and subsequently, the 43S complex"/>
</dbReference>
<dbReference type="Reactome" id="R-SCE-72702">
    <property type="pathway name" value="Ribosomal scanning and start codon recognition"/>
</dbReference>
<dbReference type="Reactome" id="R-SCE-72706">
    <property type="pathway name" value="GTP hydrolysis and joining of the 60S ribosomal subunit"/>
</dbReference>
<dbReference type="Reactome" id="R-SCE-975956">
    <property type="pathway name" value="Nonsense Mediated Decay (NMD) independent of the Exon Junction Complex (EJC)"/>
</dbReference>
<dbReference type="Reactome" id="R-SCE-975957">
    <property type="pathway name" value="Nonsense Mediated Decay (NMD) enhanced by the Exon Junction Complex (EJC)"/>
</dbReference>
<dbReference type="BioGRID-ORCS" id="851589">
    <property type="hits" value="0 hits in 10 CRISPR screens"/>
</dbReference>
<dbReference type="BioGRID-ORCS" id="852337">
    <property type="hits" value="8 hits in 10 CRISPR screens"/>
</dbReference>
<dbReference type="PRO" id="PR:P0CX47"/>
<dbReference type="Proteomes" id="UP000002311">
    <property type="component" value="Chromosome IV"/>
</dbReference>
<dbReference type="RNAct" id="P0CX47">
    <property type="molecule type" value="protein"/>
</dbReference>
<dbReference type="ExpressionAtlas" id="P0CX47">
    <property type="expression patterns" value="baseline and differential"/>
</dbReference>
<dbReference type="GO" id="GO:0030686">
    <property type="term" value="C:90S preribosome"/>
    <property type="evidence" value="ECO:0007005"/>
    <property type="project" value="SGD"/>
</dbReference>
<dbReference type="GO" id="GO:0005829">
    <property type="term" value="C:cytosol"/>
    <property type="evidence" value="ECO:0000304"/>
    <property type="project" value="Reactome"/>
</dbReference>
<dbReference type="GO" id="GO:0022627">
    <property type="term" value="C:cytosolic small ribosomal subunit"/>
    <property type="evidence" value="ECO:0000314"/>
    <property type="project" value="SGD"/>
</dbReference>
<dbReference type="GO" id="GO:0019843">
    <property type="term" value="F:rRNA binding"/>
    <property type="evidence" value="ECO:0007669"/>
    <property type="project" value="UniProtKB-KW"/>
</dbReference>
<dbReference type="GO" id="GO:0003735">
    <property type="term" value="F:structural constituent of ribosome"/>
    <property type="evidence" value="ECO:0000314"/>
    <property type="project" value="SGD"/>
</dbReference>
<dbReference type="GO" id="GO:0000462">
    <property type="term" value="P:maturation of SSU-rRNA from tricistronic rRNA transcript (SSU-rRNA, 5.8S rRNA, LSU-rRNA)"/>
    <property type="evidence" value="ECO:0000316"/>
    <property type="project" value="SGD"/>
</dbReference>
<dbReference type="GO" id="GO:0000028">
    <property type="term" value="P:ribosomal small subunit assembly"/>
    <property type="evidence" value="ECO:0000315"/>
    <property type="project" value="SGD"/>
</dbReference>
<dbReference type="GO" id="GO:0006412">
    <property type="term" value="P:translation"/>
    <property type="evidence" value="ECO:0007669"/>
    <property type="project" value="InterPro"/>
</dbReference>
<dbReference type="CDD" id="cd00364">
    <property type="entry name" value="Ribosomal_uS17"/>
    <property type="match status" value="1"/>
</dbReference>
<dbReference type="FunFam" id="2.40.50.1000:FF:000001">
    <property type="entry name" value="40S ribosomal protein S11"/>
    <property type="match status" value="1"/>
</dbReference>
<dbReference type="Gene3D" id="2.40.50.1000">
    <property type="match status" value="1"/>
</dbReference>
<dbReference type="InterPro" id="IPR012340">
    <property type="entry name" value="NA-bd_OB-fold"/>
</dbReference>
<dbReference type="InterPro" id="IPR000266">
    <property type="entry name" value="Ribosomal_uS17"/>
</dbReference>
<dbReference type="InterPro" id="IPR028333">
    <property type="entry name" value="Ribosomal_uS17_arc/euk"/>
</dbReference>
<dbReference type="InterPro" id="IPR019979">
    <property type="entry name" value="Ribosomal_uS17_CS"/>
</dbReference>
<dbReference type="InterPro" id="IPR032440">
    <property type="entry name" value="Ribosomal_uS17_N"/>
</dbReference>
<dbReference type="NCBIfam" id="NF006345">
    <property type="entry name" value="PRK08572.1"/>
    <property type="match status" value="1"/>
</dbReference>
<dbReference type="NCBIfam" id="TIGR03630">
    <property type="entry name" value="uS17_arch"/>
    <property type="match status" value="1"/>
</dbReference>
<dbReference type="PANTHER" id="PTHR10744">
    <property type="entry name" value="40S RIBOSOMAL PROTEIN S11 FAMILY MEMBER"/>
    <property type="match status" value="1"/>
</dbReference>
<dbReference type="PANTHER" id="PTHR10744:SF9">
    <property type="entry name" value="40S RIBOSOMAL PROTEIN S11-RELATED"/>
    <property type="match status" value="1"/>
</dbReference>
<dbReference type="Pfam" id="PF00366">
    <property type="entry name" value="Ribosomal_S17"/>
    <property type="match status" value="1"/>
</dbReference>
<dbReference type="Pfam" id="PF16205">
    <property type="entry name" value="Ribosomal_S17_N"/>
    <property type="match status" value="1"/>
</dbReference>
<dbReference type="PRINTS" id="PR00973">
    <property type="entry name" value="RIBOSOMALS17"/>
</dbReference>
<dbReference type="SUPFAM" id="SSF50249">
    <property type="entry name" value="Nucleic acid-binding proteins"/>
    <property type="match status" value="1"/>
</dbReference>
<dbReference type="PROSITE" id="PS00056">
    <property type="entry name" value="RIBOSOMAL_S17"/>
    <property type="match status" value="1"/>
</dbReference>
<keyword id="KW-0002">3D-structure</keyword>
<keyword id="KW-0007">Acetylation</keyword>
<keyword id="KW-0963">Cytoplasm</keyword>
<keyword id="KW-0903">Direct protein sequencing</keyword>
<keyword id="KW-1017">Isopeptide bond</keyword>
<keyword id="KW-1185">Reference proteome</keyword>
<keyword id="KW-0687">Ribonucleoprotein</keyword>
<keyword id="KW-0689">Ribosomal protein</keyword>
<keyword id="KW-0694">RNA-binding</keyword>
<keyword id="KW-0699">rRNA-binding</keyword>
<keyword id="KW-0832">Ubl conjugation</keyword>
<accession>P0CX47</accession>
<accession>D6VQ48</accession>
<accession>O11852</accession>
<accession>P26781</accession>
<organism>
    <name type="scientific">Saccharomyces cerevisiae (strain ATCC 204508 / S288c)</name>
    <name type="common">Baker's yeast</name>
    <dbReference type="NCBI Taxonomy" id="559292"/>
    <lineage>
        <taxon>Eukaryota</taxon>
        <taxon>Fungi</taxon>
        <taxon>Dikarya</taxon>
        <taxon>Ascomycota</taxon>
        <taxon>Saccharomycotina</taxon>
        <taxon>Saccharomycetes</taxon>
        <taxon>Saccharomycetales</taxon>
        <taxon>Saccharomycetaceae</taxon>
        <taxon>Saccharomyces</taxon>
    </lineage>
</organism>
<protein>
    <recommendedName>
        <fullName evidence="5">Small ribosomal subunit protein uS17A</fullName>
    </recommendedName>
    <alternativeName>
        <fullName evidence="6">40S ribosomal protein S11-A</fullName>
    </alternativeName>
    <alternativeName>
        <fullName>RP41</fullName>
    </alternativeName>
    <alternativeName>
        <fullName>S18</fullName>
    </alternativeName>
    <alternativeName>
        <fullName>YS12</fullName>
    </alternativeName>
</protein>
<reference key="1">
    <citation type="journal article" date="1994" name="Genetics">
        <title>Reduced dosage of genes encoding ribosomal protein S18 suppresses a mitochondrial initiation codon mutation in Saccharomyces cerevisiae.</title>
        <authorList>
            <person name="Folley L.S."/>
            <person name="Fox T.D."/>
        </authorList>
    </citation>
    <scope>NUCLEOTIDE SEQUENCE [GENOMIC DNA]</scope>
    <source>
        <strain>ATCC 204508 / S288c</strain>
    </source>
</reference>
<reference key="2">
    <citation type="journal article" date="1996" name="Yeast">
        <title>Sequencing and analysis of a 35.4 kb region on the right arm of chromosome IV from Saccharomyces cerevisiae reveal 23 open reading frames.</title>
        <authorList>
            <person name="Eide L.G."/>
            <person name="Sander C."/>
            <person name="Prydz H."/>
        </authorList>
    </citation>
    <scope>NUCLEOTIDE SEQUENCE [GENOMIC DNA]</scope>
</reference>
<reference key="3">
    <citation type="journal article" date="1997" name="Nature">
        <title>The nucleotide sequence of Saccharomyces cerevisiae chromosome IV.</title>
        <authorList>
            <person name="Jacq C."/>
            <person name="Alt-Moerbe J."/>
            <person name="Andre B."/>
            <person name="Arnold W."/>
            <person name="Bahr A."/>
            <person name="Ballesta J.P.G."/>
            <person name="Bargues M."/>
            <person name="Baron L."/>
            <person name="Becker A."/>
            <person name="Biteau N."/>
            <person name="Bloecker H."/>
            <person name="Blugeon C."/>
            <person name="Boskovic J."/>
            <person name="Brandt P."/>
            <person name="Brueckner M."/>
            <person name="Buitrago M.J."/>
            <person name="Coster F."/>
            <person name="Delaveau T."/>
            <person name="del Rey F."/>
            <person name="Dujon B."/>
            <person name="Eide L.G."/>
            <person name="Garcia-Cantalejo J.M."/>
            <person name="Goffeau A."/>
            <person name="Gomez-Peris A."/>
            <person name="Granotier C."/>
            <person name="Hanemann V."/>
            <person name="Hankeln T."/>
            <person name="Hoheisel J.D."/>
            <person name="Jaeger W."/>
            <person name="Jimenez A."/>
            <person name="Jonniaux J.-L."/>
            <person name="Kraemer C."/>
            <person name="Kuester H."/>
            <person name="Laamanen P."/>
            <person name="Legros Y."/>
            <person name="Louis E.J."/>
            <person name="Moeller-Rieker S."/>
            <person name="Monnet A."/>
            <person name="Moro M."/>
            <person name="Mueller-Auer S."/>
            <person name="Nussbaumer B."/>
            <person name="Paricio N."/>
            <person name="Paulin L."/>
            <person name="Perea J."/>
            <person name="Perez-Alonso M."/>
            <person name="Perez-Ortin J.E."/>
            <person name="Pohl T.M."/>
            <person name="Prydz H."/>
            <person name="Purnelle B."/>
            <person name="Rasmussen S.W."/>
            <person name="Remacha M.A."/>
            <person name="Revuelta J.L."/>
            <person name="Rieger M."/>
            <person name="Salom D."/>
            <person name="Saluz H.P."/>
            <person name="Saiz J.E."/>
            <person name="Saren A.-M."/>
            <person name="Schaefer M."/>
            <person name="Scharfe M."/>
            <person name="Schmidt E.R."/>
            <person name="Schneider C."/>
            <person name="Scholler P."/>
            <person name="Schwarz S."/>
            <person name="Soler-Mira A."/>
            <person name="Urrestarazu L.A."/>
            <person name="Verhasselt P."/>
            <person name="Vissers S."/>
            <person name="Voet M."/>
            <person name="Volckaert G."/>
            <person name="Wagner G."/>
            <person name="Wambutt R."/>
            <person name="Wedler E."/>
            <person name="Wedler H."/>
            <person name="Woelfl S."/>
            <person name="Harris D.E."/>
            <person name="Bowman S."/>
            <person name="Brown D."/>
            <person name="Churcher C.M."/>
            <person name="Connor R."/>
            <person name="Dedman K."/>
            <person name="Gentles S."/>
            <person name="Hamlin N."/>
            <person name="Hunt S."/>
            <person name="Jones L."/>
            <person name="McDonald S."/>
            <person name="Murphy L.D."/>
            <person name="Niblett D."/>
            <person name="Odell C."/>
            <person name="Oliver K."/>
            <person name="Rajandream M.A."/>
            <person name="Richards C."/>
            <person name="Shore L."/>
            <person name="Walsh S.V."/>
            <person name="Barrell B.G."/>
            <person name="Dietrich F.S."/>
            <person name="Mulligan J.T."/>
            <person name="Allen E."/>
            <person name="Araujo R."/>
            <person name="Aviles E."/>
            <person name="Berno A."/>
            <person name="Carpenter J."/>
            <person name="Chen E."/>
            <person name="Cherry J.M."/>
            <person name="Chung E."/>
            <person name="Duncan M."/>
            <person name="Hunicke-Smith S."/>
            <person name="Hyman R.W."/>
            <person name="Komp C."/>
            <person name="Lashkari D."/>
            <person name="Lew H."/>
            <person name="Lin D."/>
            <person name="Mosedale D."/>
            <person name="Nakahara K."/>
            <person name="Namath A."/>
            <person name="Oefner P."/>
            <person name="Oh C."/>
            <person name="Petel F.X."/>
            <person name="Roberts D."/>
            <person name="Schramm S."/>
            <person name="Schroeder M."/>
            <person name="Shogren T."/>
            <person name="Shroff N."/>
            <person name="Winant A."/>
            <person name="Yelton M.A."/>
            <person name="Botstein D."/>
            <person name="Davis R.W."/>
            <person name="Johnston M."/>
            <person name="Andrews S."/>
            <person name="Brinkman R."/>
            <person name="Cooper J."/>
            <person name="Ding H."/>
            <person name="Du Z."/>
            <person name="Favello A."/>
            <person name="Fulton L."/>
            <person name="Gattung S."/>
            <person name="Greco T."/>
            <person name="Hallsworth K."/>
            <person name="Hawkins J."/>
            <person name="Hillier L.W."/>
            <person name="Jier M."/>
            <person name="Johnson D."/>
            <person name="Johnston L."/>
            <person name="Kirsten J."/>
            <person name="Kucaba T."/>
            <person name="Langston Y."/>
            <person name="Latreille P."/>
            <person name="Le T."/>
            <person name="Mardis E."/>
            <person name="Menezes S."/>
            <person name="Miller N."/>
            <person name="Nhan M."/>
            <person name="Pauley A."/>
            <person name="Peluso D."/>
            <person name="Rifkin L."/>
            <person name="Riles L."/>
            <person name="Taich A."/>
            <person name="Trevaskis E."/>
            <person name="Vignati D."/>
            <person name="Wilcox L."/>
            <person name="Wohldman P."/>
            <person name="Vaudin M."/>
            <person name="Wilson R."/>
            <person name="Waterston R."/>
            <person name="Albermann K."/>
            <person name="Hani J."/>
            <person name="Heumann K."/>
            <person name="Kleine K."/>
            <person name="Mewes H.-W."/>
            <person name="Zollner A."/>
            <person name="Zaccaria P."/>
        </authorList>
    </citation>
    <scope>NUCLEOTIDE SEQUENCE [LARGE SCALE GENOMIC DNA]</scope>
    <source>
        <strain>ATCC 204508 / S288c</strain>
    </source>
</reference>
<reference key="4">
    <citation type="journal article" date="2014" name="G3 (Bethesda)">
        <title>The reference genome sequence of Saccharomyces cerevisiae: Then and now.</title>
        <authorList>
            <person name="Engel S.R."/>
            <person name="Dietrich F.S."/>
            <person name="Fisk D.G."/>
            <person name="Binkley G."/>
            <person name="Balakrishnan R."/>
            <person name="Costanzo M.C."/>
            <person name="Dwight S.S."/>
            <person name="Hitz B.C."/>
            <person name="Karra K."/>
            <person name="Nash R.S."/>
            <person name="Weng S."/>
            <person name="Wong E.D."/>
            <person name="Lloyd P."/>
            <person name="Skrzypek M.S."/>
            <person name="Miyasato S.R."/>
            <person name="Simison M."/>
            <person name="Cherry J.M."/>
        </authorList>
    </citation>
    <scope>GENOME REANNOTATION</scope>
    <source>
        <strain>ATCC 204508 / S288c</strain>
    </source>
</reference>
<reference key="5">
    <citation type="journal article" date="1992" name="J. Biol. Chem.">
        <title>NH2-terminal acetylation of ribosomal proteins of Saccharomyces cerevisiae.</title>
        <authorList>
            <person name="Takakura H."/>
            <person name="Tsunasawa S."/>
            <person name="Miyagi M."/>
            <person name="Warner J.R."/>
        </authorList>
    </citation>
    <scope>PROTEIN SEQUENCE OF 2-21</scope>
    <scope>ACETYLATION AT SER-2 BY NATA</scope>
</reference>
<reference key="6">
    <citation type="journal article" date="1998" name="Yeast">
        <title>The list of cytoplasmic ribosomal proteins of Saccharomyces cerevisiae.</title>
        <authorList>
            <person name="Planta R.J."/>
            <person name="Mager W.H."/>
        </authorList>
    </citation>
    <scope>NOMENCLATURE</scope>
    <scope>SUBUNIT</scope>
</reference>
<reference key="7">
    <citation type="journal article" date="1999" name="J. Biol. Chem.">
        <title>The action of N-terminal acetyltransferases on yeast ribosomal proteins.</title>
        <authorList>
            <person name="Arnold R.J."/>
            <person name="Polevoda B."/>
            <person name="Reilly J.P."/>
            <person name="Sherman F."/>
        </authorList>
    </citation>
    <scope>CLEAVAGE OF INITIATOR METHIONINE</scope>
    <scope>ACETYLATION AT SER-2 BY NATA</scope>
</reference>
<reference key="8">
    <citation type="journal article" date="2003" name="Nature">
        <title>Global analysis of protein localization in budding yeast.</title>
        <authorList>
            <person name="Huh W.-K."/>
            <person name="Falvo J.V."/>
            <person name="Gerke L.C."/>
            <person name="Carroll A.S."/>
            <person name="Howson R.W."/>
            <person name="Weissman J.S."/>
            <person name="O'Shea E.K."/>
        </authorList>
    </citation>
    <scope>SUBCELLULAR LOCATION [LARGE SCALE ANALYSIS]</scope>
</reference>
<reference key="9">
    <citation type="journal article" date="2012" name="Proc. Natl. Acad. Sci. U.S.A.">
        <title>N-terminal acetylome analyses and functional insights of the N-terminal acetyltransferase NatB.</title>
        <authorList>
            <person name="Van Damme P."/>
            <person name="Lasa M."/>
            <person name="Polevoda B."/>
            <person name="Gazquez C."/>
            <person name="Elosegui-Artola A."/>
            <person name="Kim D.S."/>
            <person name="De Juan-Pardo E."/>
            <person name="Demeyer K."/>
            <person name="Hole K."/>
            <person name="Larrea E."/>
            <person name="Timmerman E."/>
            <person name="Prieto J."/>
            <person name="Arnesen T."/>
            <person name="Sherman F."/>
            <person name="Gevaert K."/>
            <person name="Aldabe R."/>
        </authorList>
    </citation>
    <scope>ACETYLATION [LARGE SCALE ANALYSIS] AT SER-2</scope>
    <scope>CLEAVAGE OF INITIATOR METHIONINE [LARGE SCALE ANALYSIS]</scope>
    <scope>IDENTIFICATION BY MASS SPECTROMETRY [LARGE SCALE ANALYSIS]</scope>
</reference>
<reference key="10">
    <citation type="journal article" date="2012" name="Proteomics">
        <title>Sites of ubiquitin attachment in Saccharomyces cerevisiae.</title>
        <authorList>
            <person name="Starita L.M."/>
            <person name="Lo R.S."/>
            <person name="Eng J.K."/>
            <person name="von Haller P.D."/>
            <person name="Fields S."/>
        </authorList>
    </citation>
    <scope>UBIQUITINATION [LARGE SCALE ANALYSIS] AT LYS-15; LYS-46; LYS-56; LYS-57; LYS-79; LYS-96; LYS-105; LYS-133; LYS-141 AND LYS-148</scope>
    <scope>IDENTIFICATION BY MASS SPECTROMETRY [LARGE SCALE ANALYSIS]</scope>
</reference>
<reference key="11">
    <citation type="journal article" date="2014" name="Curr. Opin. Struct. Biol.">
        <title>A new system for naming ribosomal proteins.</title>
        <authorList>
            <person name="Ban N."/>
            <person name="Beckmann R."/>
            <person name="Cate J.H.D."/>
            <person name="Dinman J.D."/>
            <person name="Dragon F."/>
            <person name="Ellis S.R."/>
            <person name="Lafontaine D.L.J."/>
            <person name="Lindahl L."/>
            <person name="Liljas A."/>
            <person name="Lipton J.M."/>
            <person name="McAlear M.A."/>
            <person name="Moore P.B."/>
            <person name="Noller H.F."/>
            <person name="Ortega J."/>
            <person name="Panse V.G."/>
            <person name="Ramakrishnan V."/>
            <person name="Spahn C.M.T."/>
            <person name="Steitz T.A."/>
            <person name="Tchorzewski M."/>
            <person name="Tollervey D."/>
            <person name="Warren A.J."/>
            <person name="Williamson J.R."/>
            <person name="Wilson D."/>
            <person name="Yonath A."/>
            <person name="Yusupov M."/>
        </authorList>
    </citation>
    <scope>NOMENCLATURE</scope>
</reference>
<reference key="12">
    <citation type="journal article" date="2001" name="Cell">
        <title>Structure of the 80S ribosome from Saccharomyces cerevisiae -- tRNA-ribosome and subunit-subunit interactions.</title>
        <authorList>
            <person name="Spahn C.M.T."/>
            <person name="Beckmann R."/>
            <person name="Eswar N."/>
            <person name="Penczek P.A."/>
            <person name="Sali A."/>
            <person name="Blobel G."/>
            <person name="Frank J."/>
        </authorList>
    </citation>
    <scope>3D-STRUCTURE MODELING OF 69-144</scope>
    <scope>ELECTRON MICROSCOPY</scope>
</reference>
<reference key="13">
    <citation type="journal article" date="2004" name="EMBO J.">
        <title>Domain movements of elongation factor eEF2 and the eukaryotic 80S ribosome facilitate tRNA translocation.</title>
        <authorList>
            <person name="Spahn C.M.T."/>
            <person name="Gomez-Lorenzo M.G."/>
            <person name="Grassucci R.A."/>
            <person name="Joergensen R."/>
            <person name="Andersen G.R."/>
            <person name="Beckmann R."/>
            <person name="Penczek P.A."/>
            <person name="Ballesta J.P.G."/>
            <person name="Frank J."/>
        </authorList>
    </citation>
    <scope>3D-STRUCTURE MODELING OF 69-144</scope>
    <scope>ELECTRON MICROSCOPY</scope>
</reference>
<reference key="14">
    <citation type="journal article" date="2010" name="Science">
        <title>Crystal structure of the eukaryotic ribosome.</title>
        <authorList>
            <person name="Ben-Shem A."/>
            <person name="Jenner L."/>
            <person name="Yusupova G."/>
            <person name="Yusupov M."/>
        </authorList>
    </citation>
    <scope>X-RAY CRYSTALLOGRAPHY (4.00 ANGSTROMS) OF 80S RIBOSOME</scope>
</reference>
<reference key="15">
    <citation type="journal article" date="2011" name="Science">
        <title>The structure of the eukaryotic ribosome at 3.0 A resolution.</title>
        <authorList>
            <person name="Ben-Shem A."/>
            <person name="Garreau de Loubresse N."/>
            <person name="Melnikov S."/>
            <person name="Jenner L."/>
            <person name="Yusupova G."/>
            <person name="Yusupov M."/>
        </authorList>
    </citation>
    <scope>X-RAY CRYSTALLOGRAPHY (3.00 ANGSTROMS) OF 80S RIBOSOME</scope>
    <scope>SUBUNIT</scope>
    <scope>SUBCELLULAR LOCATION</scope>
</reference>
<evidence type="ECO:0000269" key="1">
    <source>
    </source>
</evidence>
<evidence type="ECO:0000269" key="2">
    <source>
    </source>
</evidence>
<evidence type="ECO:0000269" key="3">
    <source>
    </source>
</evidence>
<evidence type="ECO:0000269" key="4">
    <source>
    </source>
</evidence>
<evidence type="ECO:0000303" key="5">
    <source>
    </source>
</evidence>
<evidence type="ECO:0000303" key="6">
    <source>
    </source>
</evidence>
<evidence type="ECO:0000305" key="7"/>
<evidence type="ECO:0000305" key="8">
    <source>
    </source>
</evidence>
<evidence type="ECO:0000305" key="9">
    <source>
    </source>
</evidence>
<evidence type="ECO:0007744" key="10">
    <source>
    </source>
</evidence>
<evidence type="ECO:0007744" key="11">
    <source>
    </source>
</evidence>
<evidence type="ECO:0007829" key="12">
    <source>
        <dbReference type="PDB" id="6ZVI"/>
    </source>
</evidence>
<evidence type="ECO:0007829" key="13">
    <source>
        <dbReference type="PDB" id="8C01"/>
    </source>
</evidence>
<evidence type="ECO:0007829" key="14">
    <source>
        <dbReference type="PDB" id="8CAS"/>
    </source>
</evidence>
<name>RS11A_YEAST</name>
<sequence length="156" mass="17749">MSTELTVQSERAFQKQPHIFNNPKVKTSKRTKRWYKNAGLGFKTPKTAIEGSYIDKKCPFTGLVSIRGKILTGTVVSTKMHRTIVIRRAYLHYIPKYNRYEKRHKNVPVHVSPAFRVQVGDIVTVGQCRPISKTVRFNVVKVSAAAGKANKQFAKF</sequence>
<gene>
    <name evidence="6" type="primary">RPS11A</name>
    <name type="synonym">RPS18A</name>
    <name type="ordered locus">YDR025W</name>
    <name type="ORF">YD9813.03</name>
</gene>
<comment type="function">
    <text evidence="8">Component of the ribosome, a large ribonucleoprotein complex responsible for the synthesis of proteins in the cell. The small ribosomal subunit (SSU) binds messenger RNAs (mRNAs) and translates the encoded message by selecting cognate aminoacyl-transfer RNA (tRNA) molecules. The large subunit (LSU) contains the ribosomal catalytic site termed the peptidyl transferase center (PTC), which catalyzes the formation of peptide bonds, thereby polymerizing the amino acids delivered by tRNAs into a polypeptide chain. The nascent polypeptides leave the ribosome through a tunnel in the LSU and interact with protein factors that function in enzymatic processing, targeting, and the membrane insertion of nascent chains at the exit of the ribosomal tunnel.</text>
</comment>
<comment type="subunit">
    <text evidence="4 9">Component of the small ribosomal subunit (SSU). Mature yeast ribosomes consist of a small (40S) and a large (60S) subunit. The 40S small subunit contains 1 molecule of ribosomal RNA (18S rRNA) and 33 different proteins (encoded by 57 genes). The large 60S subunit contains 3 rRNA molecules (25S, 5.8S and 5S rRNA) and 46 different proteins (encoded by 81 genes) (PubMed:22096102, PubMed:9559554).</text>
</comment>
<comment type="subcellular location">
    <subcellularLocation>
        <location evidence="2 4">Cytoplasm</location>
    </subcellularLocation>
</comment>
<comment type="PTM">
    <text evidence="1 3">N-terminally acetylated by acetyltransferase NatA.</text>
</comment>
<comment type="miscellaneous">
    <text evidence="7">There are 2 genes for uS17 in yeast.</text>
</comment>
<comment type="similarity">
    <text evidence="7">Belongs to the universal ribosomal protein uS17 family.</text>
</comment>
<feature type="initiator methionine" description="Removed" evidence="1 3 11">
    <location>
        <position position="1"/>
    </location>
</feature>
<feature type="chain" id="PRO_0000128523" description="Small ribosomal subunit protein uS17A">
    <location>
        <begin position="2"/>
        <end position="156"/>
    </location>
</feature>
<feature type="modified residue" description="N-acetylserine" evidence="1 3 11">
    <location>
        <position position="2"/>
    </location>
</feature>
<feature type="cross-link" description="Glycyl lysine isopeptide (Lys-Gly) (interchain with G-Cter in ubiquitin)" evidence="10">
    <location>
        <position position="15"/>
    </location>
</feature>
<feature type="cross-link" description="Glycyl lysine isopeptide (Lys-Gly) (interchain with G-Cter in ubiquitin)" evidence="10">
    <location>
        <position position="46"/>
    </location>
</feature>
<feature type="cross-link" description="Glycyl lysine isopeptide (Lys-Gly) (interchain with G-Cter in ubiquitin)" evidence="10">
    <location>
        <position position="56"/>
    </location>
</feature>
<feature type="cross-link" description="Glycyl lysine isopeptide (Lys-Gly) (interchain with G-Cter in ubiquitin)" evidence="10">
    <location>
        <position position="57"/>
    </location>
</feature>
<feature type="cross-link" description="Glycyl lysine isopeptide (Lys-Gly) (interchain with G-Cter in ubiquitin)" evidence="10">
    <location>
        <position position="79"/>
    </location>
</feature>
<feature type="cross-link" description="Glycyl lysine isopeptide (Lys-Gly) (interchain with G-Cter in ubiquitin)" evidence="10">
    <location>
        <position position="96"/>
    </location>
</feature>
<feature type="cross-link" description="Glycyl lysine isopeptide (Lys-Gly) (interchain with G-Cter in ubiquitin)" evidence="10">
    <location>
        <position position="105"/>
    </location>
</feature>
<feature type="cross-link" description="Glycyl lysine isopeptide (Lys-Gly) (interchain with G-Cter in ubiquitin)" evidence="10">
    <location>
        <position position="133"/>
    </location>
</feature>
<feature type="cross-link" description="Glycyl lysine isopeptide (Lys-Gly) (interchain with G-Cter in ubiquitin)" evidence="10">
    <location>
        <position position="141"/>
    </location>
</feature>
<feature type="cross-link" description="Glycyl lysine isopeptide (Lys-Gly) (interchain with G-Cter in ubiquitin)" evidence="10">
    <location>
        <position position="148"/>
    </location>
</feature>
<feature type="sequence conflict" description="In Ref. 5; AA sequence." evidence="7" ref="5">
    <original>AF</original>
    <variation>FA</variation>
    <location>
        <begin position="12"/>
        <end position="13"/>
    </location>
</feature>
<feature type="strand" evidence="13">
    <location>
        <begin position="10"/>
        <end position="12"/>
    </location>
</feature>
<feature type="turn" evidence="13">
    <location>
        <begin position="23"/>
        <end position="25"/>
    </location>
</feature>
<feature type="strand" evidence="12">
    <location>
        <begin position="28"/>
        <end position="31"/>
    </location>
</feature>
<feature type="helix" evidence="13">
    <location>
        <begin position="46"/>
        <end position="50"/>
    </location>
</feature>
<feature type="turn" evidence="13">
    <location>
        <begin position="59"/>
        <end position="61"/>
    </location>
</feature>
<feature type="strand" evidence="13">
    <location>
        <begin position="70"/>
        <end position="77"/>
    </location>
</feature>
<feature type="strand" evidence="13">
    <location>
        <begin position="83"/>
        <end position="94"/>
    </location>
</feature>
<feature type="turn" evidence="13">
    <location>
        <begin position="95"/>
        <end position="98"/>
    </location>
</feature>
<feature type="strand" evidence="13">
    <location>
        <begin position="99"/>
        <end position="110"/>
    </location>
</feature>
<feature type="strand" evidence="14">
    <location>
        <begin position="113"/>
        <end position="115"/>
    </location>
</feature>
<feature type="strand" evidence="13">
    <location>
        <begin position="122"/>
        <end position="127"/>
    </location>
</feature>
<feature type="strand" evidence="13">
    <location>
        <begin position="132"/>
        <end position="134"/>
    </location>
</feature>
<feature type="strand" evidence="13">
    <location>
        <begin position="137"/>
        <end position="143"/>
    </location>
</feature>
<proteinExistence type="evidence at protein level"/>